<dbReference type="EC" id="2.3.1.275" evidence="1"/>
<dbReference type="EMBL" id="CP000544">
    <property type="protein sequence ID" value="ABM63092.1"/>
    <property type="molecule type" value="Genomic_DNA"/>
</dbReference>
<dbReference type="RefSeq" id="WP_011815114.1">
    <property type="nucleotide sequence ID" value="NC_008789.1"/>
</dbReference>
<dbReference type="SMR" id="A1WZI0"/>
<dbReference type="STRING" id="349124.Hhal_2329"/>
<dbReference type="KEGG" id="hha:Hhal_2329"/>
<dbReference type="eggNOG" id="COG0344">
    <property type="taxonomic scope" value="Bacteria"/>
</dbReference>
<dbReference type="HOGENOM" id="CLU_081254_0_0_6"/>
<dbReference type="OrthoDB" id="9777124at2"/>
<dbReference type="UniPathway" id="UPA00085"/>
<dbReference type="Proteomes" id="UP000000647">
    <property type="component" value="Chromosome"/>
</dbReference>
<dbReference type="GO" id="GO:0005886">
    <property type="term" value="C:plasma membrane"/>
    <property type="evidence" value="ECO:0007669"/>
    <property type="project" value="UniProtKB-SubCell"/>
</dbReference>
<dbReference type="GO" id="GO:0043772">
    <property type="term" value="F:acyl-phosphate glycerol-3-phosphate acyltransferase activity"/>
    <property type="evidence" value="ECO:0007669"/>
    <property type="project" value="UniProtKB-UniRule"/>
</dbReference>
<dbReference type="GO" id="GO:0008654">
    <property type="term" value="P:phospholipid biosynthetic process"/>
    <property type="evidence" value="ECO:0007669"/>
    <property type="project" value="UniProtKB-UniRule"/>
</dbReference>
<dbReference type="HAMAP" id="MF_01043">
    <property type="entry name" value="PlsY"/>
    <property type="match status" value="1"/>
</dbReference>
<dbReference type="InterPro" id="IPR003811">
    <property type="entry name" value="G3P_acylTferase_PlsY"/>
</dbReference>
<dbReference type="NCBIfam" id="TIGR00023">
    <property type="entry name" value="glycerol-3-phosphate 1-O-acyltransferase PlsY"/>
    <property type="match status" value="1"/>
</dbReference>
<dbReference type="PANTHER" id="PTHR30309:SF0">
    <property type="entry name" value="GLYCEROL-3-PHOSPHATE ACYLTRANSFERASE-RELATED"/>
    <property type="match status" value="1"/>
</dbReference>
<dbReference type="PANTHER" id="PTHR30309">
    <property type="entry name" value="INNER MEMBRANE PROTEIN YGIH"/>
    <property type="match status" value="1"/>
</dbReference>
<dbReference type="Pfam" id="PF02660">
    <property type="entry name" value="G3P_acyltransf"/>
    <property type="match status" value="1"/>
</dbReference>
<dbReference type="SMART" id="SM01207">
    <property type="entry name" value="G3P_acyltransf"/>
    <property type="match status" value="1"/>
</dbReference>
<organism>
    <name type="scientific">Halorhodospira halophila (strain DSM 244 / SL1)</name>
    <name type="common">Ectothiorhodospira halophila (strain DSM 244 / SL1)</name>
    <dbReference type="NCBI Taxonomy" id="349124"/>
    <lineage>
        <taxon>Bacteria</taxon>
        <taxon>Pseudomonadati</taxon>
        <taxon>Pseudomonadota</taxon>
        <taxon>Gammaproteobacteria</taxon>
        <taxon>Chromatiales</taxon>
        <taxon>Ectothiorhodospiraceae</taxon>
        <taxon>Halorhodospira</taxon>
    </lineage>
</organism>
<evidence type="ECO:0000255" key="1">
    <source>
        <dbReference type="HAMAP-Rule" id="MF_01043"/>
    </source>
</evidence>
<proteinExistence type="inferred from homology"/>
<gene>
    <name evidence="1" type="primary">plsY</name>
    <name type="ordered locus">Hhal_2329</name>
</gene>
<comment type="function">
    <text evidence="1">Catalyzes the transfer of an acyl group from acyl-phosphate (acyl-PO(4)) to glycerol-3-phosphate (G3P) to form lysophosphatidic acid (LPA). This enzyme utilizes acyl-phosphate as fatty acyl donor, but not acyl-CoA or acyl-ACP.</text>
</comment>
<comment type="catalytic activity">
    <reaction evidence="1">
        <text>an acyl phosphate + sn-glycerol 3-phosphate = a 1-acyl-sn-glycero-3-phosphate + phosphate</text>
        <dbReference type="Rhea" id="RHEA:34075"/>
        <dbReference type="ChEBI" id="CHEBI:43474"/>
        <dbReference type="ChEBI" id="CHEBI:57597"/>
        <dbReference type="ChEBI" id="CHEBI:57970"/>
        <dbReference type="ChEBI" id="CHEBI:59918"/>
        <dbReference type="EC" id="2.3.1.275"/>
    </reaction>
</comment>
<comment type="pathway">
    <text evidence="1">Lipid metabolism; phospholipid metabolism.</text>
</comment>
<comment type="subunit">
    <text evidence="1">Probably interacts with PlsX.</text>
</comment>
<comment type="subcellular location">
    <subcellularLocation>
        <location evidence="1">Cell inner membrane</location>
        <topology evidence="1">Multi-pass membrane protein</topology>
    </subcellularLocation>
</comment>
<comment type="similarity">
    <text evidence="1">Belongs to the PlsY family.</text>
</comment>
<protein>
    <recommendedName>
        <fullName evidence="1">Glycerol-3-phosphate acyltransferase</fullName>
    </recommendedName>
    <alternativeName>
        <fullName evidence="1">Acyl-PO4 G3P acyltransferase</fullName>
    </alternativeName>
    <alternativeName>
        <fullName evidence="1">Acyl-phosphate--glycerol-3-phosphate acyltransferase</fullName>
    </alternativeName>
    <alternativeName>
        <fullName evidence="1">G3P acyltransferase</fullName>
        <shortName evidence="1">GPAT</shortName>
        <ecNumber evidence="1">2.3.1.275</ecNumber>
    </alternativeName>
    <alternativeName>
        <fullName evidence="1">Lysophosphatidic acid synthase</fullName>
        <shortName evidence="1">LPA synthase</shortName>
    </alternativeName>
</protein>
<feature type="chain" id="PRO_1000084386" description="Glycerol-3-phosphate acyltransferase">
    <location>
        <begin position="1"/>
        <end position="197"/>
    </location>
</feature>
<feature type="transmembrane region" description="Helical" evidence="1">
    <location>
        <begin position="2"/>
        <end position="22"/>
    </location>
</feature>
<feature type="transmembrane region" description="Helical" evidence="1">
    <location>
        <begin position="53"/>
        <end position="73"/>
    </location>
</feature>
<feature type="transmembrane region" description="Helical" evidence="1">
    <location>
        <begin position="78"/>
        <end position="98"/>
    </location>
</feature>
<feature type="transmembrane region" description="Helical" evidence="1">
    <location>
        <begin position="112"/>
        <end position="132"/>
    </location>
</feature>
<feature type="transmembrane region" description="Helical" evidence="1">
    <location>
        <begin position="152"/>
        <end position="174"/>
    </location>
</feature>
<reference key="1">
    <citation type="submission" date="2006-12" db="EMBL/GenBank/DDBJ databases">
        <title>Complete sequence of Halorhodospira halophila SL1.</title>
        <authorList>
            <consortium name="US DOE Joint Genome Institute"/>
            <person name="Copeland A."/>
            <person name="Lucas S."/>
            <person name="Lapidus A."/>
            <person name="Barry K."/>
            <person name="Detter J.C."/>
            <person name="Glavina del Rio T."/>
            <person name="Hammon N."/>
            <person name="Israni S."/>
            <person name="Dalin E."/>
            <person name="Tice H."/>
            <person name="Pitluck S."/>
            <person name="Saunders E."/>
            <person name="Brettin T."/>
            <person name="Bruce D."/>
            <person name="Han C."/>
            <person name="Tapia R."/>
            <person name="Schmutz J."/>
            <person name="Larimer F."/>
            <person name="Land M."/>
            <person name="Hauser L."/>
            <person name="Kyrpides N."/>
            <person name="Mikhailova N."/>
            <person name="Hoff W."/>
            <person name="Richardson P."/>
        </authorList>
    </citation>
    <scope>NUCLEOTIDE SEQUENCE [LARGE SCALE GENOMIC DNA]</scope>
    <source>
        <strain>DSM 244 / SL1</strain>
    </source>
</reference>
<name>PLSY_HALHL</name>
<keyword id="KW-0997">Cell inner membrane</keyword>
<keyword id="KW-1003">Cell membrane</keyword>
<keyword id="KW-0444">Lipid biosynthesis</keyword>
<keyword id="KW-0443">Lipid metabolism</keyword>
<keyword id="KW-0472">Membrane</keyword>
<keyword id="KW-0594">Phospholipid biosynthesis</keyword>
<keyword id="KW-1208">Phospholipid metabolism</keyword>
<keyword id="KW-1185">Reference proteome</keyword>
<keyword id="KW-0808">Transferase</keyword>
<keyword id="KW-0812">Transmembrane</keyword>
<keyword id="KW-1133">Transmembrane helix</keyword>
<accession>A1WZI0</accession>
<sequence length="197" mass="20343">MLDVILVIIGYLIGSISSAIVVCRAMNLGDPRQGGSGNPGATNVLRLAGKVPAGITLLGDWLKGTLPVLLAWLATEDPVVASAAGLAAFFGHLFPVYFRFQGGKGVATGLGVILAWSPLALLATVVTWLAVAGAFRYSSLAAVVAFAMAPIYMLWLSASPVLTAATAILTAAIVWRHRENIVRLAAGEESRIGSSGS</sequence>